<reference key="1">
    <citation type="journal article" date="2007" name="Rapid Commun. Mass Spectrom.">
        <title>Rapid mass spectral identification of contryphans. Detection of characteristic peptide ions by fragmentation of intact disulfide-bonded peptides in crude venom.</title>
        <authorList>
            <person name="Thakur S.S."/>
            <person name="Balaram P."/>
        </authorList>
    </citation>
    <scope>PROTEIN SEQUENCE</scope>
    <scope>IDENTIFICATION BY MASS SPECTROMETRY</scope>
    <scope>MASS SPECTROMETRY</scope>
    <scope>SUBCELLULAR LOCATION</scope>
    <scope>HYDROXYLATION AT PRO-5</scope>
    <scope>D-AMINO ACID AT TRP-6</scope>
    <scope>AMIDATION AT CYS-10</scope>
    <source>
        <tissue>Venom</tissue>
    </source>
</reference>
<feature type="peptide" id="PRO_0000439690" description="Contryphan-Bt" evidence="6">
    <location>
        <begin position="1"/>
        <end position="10"/>
    </location>
</feature>
<feature type="modified residue" description="4-hydroxyproline" evidence="6">
    <location>
        <position position="5"/>
    </location>
</feature>
<feature type="modified residue" description="D-tryptophan" evidence="6">
    <location>
        <position position="6"/>
    </location>
</feature>
<feature type="modified residue" description="Cysteine amide" evidence="6">
    <location>
        <position position="10"/>
    </location>
</feature>
<feature type="disulfide bond" evidence="6">
    <location>
        <begin position="4"/>
        <end position="10"/>
    </location>
</feature>
<comment type="function">
    <text evidence="1 2 4 5">Its target is unknown, but this toxin may modulate voltage-activated calcium channels (Cav) or calcium-dependent potassium channels (KCa).</text>
</comment>
<comment type="subcellular location">
    <subcellularLocation>
        <location evidence="6">Secreted</location>
    </subcellularLocation>
</comment>
<comment type="tissue specificity">
    <text evidence="9">Expressed by the venom duct.</text>
</comment>
<comment type="domain">
    <text evidence="8">The cysteine framework is C-C.</text>
</comment>
<comment type="mass spectrometry" mass="1187.0" method="MALDI" evidence="6"/>
<comment type="miscellaneous">
    <text evidence="2">Exists in two forms, due to cis-trans isomerization at 4-Cys-hydroxyPro-5.</text>
</comment>
<comment type="miscellaneous">
    <text evidence="3">Exists in two forms, due to cis-trans isomerization at 4-Cys-hydroxyPro-5. The cis conformation is the major form.</text>
</comment>
<comment type="similarity">
    <text evidence="8">Belongs to the O2 superfamily. Contryphan family.</text>
</comment>
<accession>P0DP19</accession>
<dbReference type="GO" id="GO:0005576">
    <property type="term" value="C:extracellular region"/>
    <property type="evidence" value="ECO:0007669"/>
    <property type="project" value="UniProtKB-SubCell"/>
</dbReference>
<dbReference type="GO" id="GO:0099106">
    <property type="term" value="F:ion channel regulator activity"/>
    <property type="evidence" value="ECO:0007669"/>
    <property type="project" value="UniProtKB-KW"/>
</dbReference>
<dbReference type="GO" id="GO:0090729">
    <property type="term" value="F:toxin activity"/>
    <property type="evidence" value="ECO:0007669"/>
    <property type="project" value="UniProtKB-KW"/>
</dbReference>
<dbReference type="InterPro" id="IPR011062">
    <property type="entry name" value="Contryphan_CS"/>
</dbReference>
<dbReference type="PROSITE" id="PS60027">
    <property type="entry name" value="CONTRYPHAN"/>
    <property type="match status" value="1"/>
</dbReference>
<protein>
    <recommendedName>
        <fullName evidence="7">Contryphan-Bt</fullName>
    </recommendedName>
    <alternativeName>
        <fullName evidence="9">B1187</fullName>
    </alternativeName>
</protein>
<organism>
    <name type="scientific">Conus betulinus</name>
    <name type="common">Beech cone</name>
    <dbReference type="NCBI Taxonomy" id="89764"/>
    <lineage>
        <taxon>Eukaryota</taxon>
        <taxon>Metazoa</taxon>
        <taxon>Spiralia</taxon>
        <taxon>Lophotrochozoa</taxon>
        <taxon>Mollusca</taxon>
        <taxon>Gastropoda</taxon>
        <taxon>Caenogastropoda</taxon>
        <taxon>Neogastropoda</taxon>
        <taxon>Conoidea</taxon>
        <taxon>Conidae</taxon>
        <taxon>Conus</taxon>
        <taxon>Dendroconus</taxon>
    </lineage>
</organism>
<keyword id="KW-0027">Amidation</keyword>
<keyword id="KW-0208">D-amino acid</keyword>
<keyword id="KW-0903">Direct protein sequencing</keyword>
<keyword id="KW-1015">Disulfide bond</keyword>
<keyword id="KW-0379">Hydroxylation</keyword>
<keyword id="KW-0872">Ion channel impairing toxin</keyword>
<keyword id="KW-0528">Neurotoxin</keyword>
<keyword id="KW-0964">Secreted</keyword>
<keyword id="KW-0800">Toxin</keyword>
<proteinExistence type="evidence at protein level"/>
<name>COW1_CONBE</name>
<sequence length="10" mass="1174">VVGCPWQPWC</sequence>
<evidence type="ECO:0000250" key="1">
    <source>
        <dbReference type="UniProtKB" id="P0C248"/>
    </source>
</evidence>
<evidence type="ECO:0000250" key="2">
    <source>
        <dbReference type="UniProtKB" id="P0C250"/>
    </source>
</evidence>
<evidence type="ECO:0000250" key="3">
    <source>
        <dbReference type="UniProtKB" id="P58787"/>
    </source>
</evidence>
<evidence type="ECO:0000250" key="4">
    <source>
        <dbReference type="UniProtKB" id="P62903"/>
    </source>
</evidence>
<evidence type="ECO:0000250" key="5">
    <source>
        <dbReference type="UniProtKB" id="P83047"/>
    </source>
</evidence>
<evidence type="ECO:0000269" key="6">
    <source>
    </source>
</evidence>
<evidence type="ECO:0000303" key="7">
    <source>
    </source>
</evidence>
<evidence type="ECO:0000305" key="8"/>
<evidence type="ECO:0000305" key="9">
    <source>
    </source>
</evidence>